<accession>A1YL80</accession>
<sequence>MDVTRLLLATLLVFLCFFAAYSHLPPEEKLRDDRSLRSNSSVNLLDLPSVSIVALNKKSKKISRKEAEKKRSSKKEASKQKVARPRTPLSVPCVSTRGSCKPPAPACCHPCASCQCRFFRSACSCRVLNVNC</sequence>
<proteinExistence type="inferred from homology"/>
<dbReference type="EMBL" id="EF094497">
    <property type="protein sequence ID" value="ABL84295.1"/>
    <property type="molecule type" value="Genomic_DNA"/>
</dbReference>
<dbReference type="GlyCosmos" id="A1YL80">
    <property type="glycosylation" value="1 site, No reported glycans"/>
</dbReference>
<dbReference type="GO" id="GO:0005615">
    <property type="term" value="C:extracellular space"/>
    <property type="evidence" value="ECO:0000250"/>
    <property type="project" value="UniProtKB"/>
</dbReference>
<dbReference type="GO" id="GO:0031779">
    <property type="term" value="F:melanocortin receptor binding"/>
    <property type="evidence" value="ECO:0007669"/>
    <property type="project" value="TreeGrafter"/>
</dbReference>
<dbReference type="GO" id="GO:0005184">
    <property type="term" value="F:neuropeptide hormone activity"/>
    <property type="evidence" value="ECO:0007669"/>
    <property type="project" value="TreeGrafter"/>
</dbReference>
<dbReference type="GO" id="GO:0009755">
    <property type="term" value="P:hormone-mediated signaling pathway"/>
    <property type="evidence" value="ECO:0007669"/>
    <property type="project" value="InterPro"/>
</dbReference>
<dbReference type="GO" id="GO:0042438">
    <property type="term" value="P:melanin biosynthetic process"/>
    <property type="evidence" value="ECO:0000250"/>
    <property type="project" value="UniProtKB"/>
</dbReference>
<dbReference type="GO" id="GO:0032438">
    <property type="term" value="P:melanosome organization"/>
    <property type="evidence" value="ECO:0007669"/>
    <property type="project" value="TreeGrafter"/>
</dbReference>
<dbReference type="FunFam" id="4.10.760.10:FF:000002">
    <property type="entry name" value="Agouti-signaling protein"/>
    <property type="match status" value="1"/>
</dbReference>
<dbReference type="Gene3D" id="4.10.760.10">
    <property type="entry name" value="Agouti domain"/>
    <property type="match status" value="1"/>
</dbReference>
<dbReference type="InterPro" id="IPR007733">
    <property type="entry name" value="Agouti"/>
</dbReference>
<dbReference type="InterPro" id="IPR027300">
    <property type="entry name" value="Agouti_dom"/>
</dbReference>
<dbReference type="InterPro" id="IPR036836">
    <property type="entry name" value="Agouti_dom_sf"/>
</dbReference>
<dbReference type="PANTHER" id="PTHR16551">
    <property type="entry name" value="AGOUTI RELATED"/>
    <property type="match status" value="1"/>
</dbReference>
<dbReference type="PANTHER" id="PTHR16551:SF1">
    <property type="entry name" value="AGOUTI-SIGNALING PROTEIN"/>
    <property type="match status" value="1"/>
</dbReference>
<dbReference type="Pfam" id="PF05039">
    <property type="entry name" value="Agouti"/>
    <property type="match status" value="1"/>
</dbReference>
<dbReference type="SMART" id="SM00792">
    <property type="entry name" value="Agouti"/>
    <property type="match status" value="1"/>
</dbReference>
<dbReference type="SUPFAM" id="SSF57055">
    <property type="entry name" value="Agouti-related protein"/>
    <property type="match status" value="1"/>
</dbReference>
<dbReference type="PROSITE" id="PS60024">
    <property type="entry name" value="AGOUTI_1"/>
    <property type="match status" value="1"/>
</dbReference>
<dbReference type="PROSITE" id="PS51150">
    <property type="entry name" value="AGOUTI_2"/>
    <property type="match status" value="1"/>
</dbReference>
<organism>
    <name type="scientific">Callimico goeldii</name>
    <name type="common">Goeldi's marmoset</name>
    <dbReference type="NCBI Taxonomy" id="9495"/>
    <lineage>
        <taxon>Eukaryota</taxon>
        <taxon>Metazoa</taxon>
        <taxon>Chordata</taxon>
        <taxon>Craniata</taxon>
        <taxon>Vertebrata</taxon>
        <taxon>Euteleostomi</taxon>
        <taxon>Mammalia</taxon>
        <taxon>Eutheria</taxon>
        <taxon>Euarchontoglires</taxon>
        <taxon>Primates</taxon>
        <taxon>Haplorrhini</taxon>
        <taxon>Platyrrhini</taxon>
        <taxon>Cebidae</taxon>
        <taxon>Callitrichinae</taxon>
        <taxon>Callimico</taxon>
    </lineage>
</organism>
<reference key="1">
    <citation type="journal article" date="2006" name="Mamm. Genome">
        <title>Investigation of the role of the agouti signaling protein gene (ASIP) in coat color evolution in primates.</title>
        <authorList>
            <person name="Mundy N.I."/>
            <person name="Kelly J."/>
        </authorList>
    </citation>
    <scope>NUCLEOTIDE SEQUENCE [GENOMIC DNA]</scope>
</reference>
<feature type="signal peptide" evidence="4">
    <location>
        <begin position="1"/>
        <end position="22"/>
    </location>
</feature>
<feature type="chain" id="PRO_0000285051" description="Agouti-signaling protein">
    <location>
        <begin position="23"/>
        <end position="132"/>
    </location>
</feature>
<feature type="domain" description="Agouti" evidence="5">
    <location>
        <begin position="93"/>
        <end position="132"/>
    </location>
</feature>
<feature type="region of interest" description="Disordered" evidence="6">
    <location>
        <begin position="61"/>
        <end position="93"/>
    </location>
</feature>
<feature type="compositionally biased region" description="Basic and acidic residues" evidence="6">
    <location>
        <begin position="64"/>
        <end position="79"/>
    </location>
</feature>
<feature type="glycosylation site" description="N-linked (GlcNAc...) asparagine" evidence="4">
    <location>
        <position position="39"/>
    </location>
</feature>
<feature type="disulfide bond" evidence="5">
    <location>
        <begin position="93"/>
        <end position="108"/>
    </location>
</feature>
<feature type="disulfide bond" evidence="5">
    <location>
        <begin position="100"/>
        <end position="114"/>
    </location>
</feature>
<feature type="disulfide bond" evidence="5">
    <location>
        <begin position="107"/>
        <end position="125"/>
    </location>
</feature>
<feature type="disulfide bond" evidence="5">
    <location>
        <begin position="111"/>
        <end position="132"/>
    </location>
</feature>
<feature type="disulfide bond" evidence="5">
    <location>
        <begin position="116"/>
        <end position="123"/>
    </location>
</feature>
<name>ASIP_CALGO</name>
<gene>
    <name type="primary">ASIP</name>
</gene>
<protein>
    <recommendedName>
        <fullName>Agouti-signaling protein</fullName>
        <shortName>ASP</shortName>
    </recommendedName>
    <alternativeName>
        <fullName>Agouti switch protein</fullName>
    </alternativeName>
</protein>
<comment type="function">
    <text evidence="3">Involved in the regulation of melanogenesis. The binding of ASP to MC1R precludes alpha-MSH initiated signaling and thus blocks production of cAMP, leading to a down-regulation of eumelanogenesis (brown/black pigment) and thus increasing synthesis of pheomelanin (yellow/red pigment) (By similarity).</text>
</comment>
<comment type="subcellular location">
    <subcellularLocation>
        <location evidence="2">Secreted</location>
    </subcellularLocation>
</comment>
<comment type="domain">
    <text evidence="1">The presence of a 'disulfide through disulfide knot' structurally defines this protein as a knottin.</text>
</comment>
<keyword id="KW-1015">Disulfide bond</keyword>
<keyword id="KW-0325">Glycoprotein</keyword>
<keyword id="KW-0960">Knottin</keyword>
<keyword id="KW-0964">Secreted</keyword>
<keyword id="KW-0732">Signal</keyword>
<evidence type="ECO:0000250" key="1"/>
<evidence type="ECO:0000250" key="2">
    <source>
        <dbReference type="UniProtKB" id="P42127"/>
    </source>
</evidence>
<evidence type="ECO:0000250" key="3">
    <source>
        <dbReference type="UniProtKB" id="Q03288"/>
    </source>
</evidence>
<evidence type="ECO:0000255" key="4"/>
<evidence type="ECO:0000255" key="5">
    <source>
        <dbReference type="PROSITE-ProRule" id="PRU00494"/>
    </source>
</evidence>
<evidence type="ECO:0000256" key="6">
    <source>
        <dbReference type="SAM" id="MobiDB-lite"/>
    </source>
</evidence>